<accession>Q3ST46</accession>
<proteinExistence type="inferred from homology"/>
<protein>
    <recommendedName>
        <fullName evidence="1">Glycine dehydrogenase (decarboxylating)</fullName>
        <ecNumber evidence="1">1.4.4.2</ecNumber>
    </recommendedName>
    <alternativeName>
        <fullName evidence="1">Glycine cleavage system P-protein</fullName>
    </alternativeName>
    <alternativeName>
        <fullName evidence="1">Glycine decarboxylase</fullName>
    </alternativeName>
    <alternativeName>
        <fullName evidence="1">Glycine dehydrogenase (aminomethyl-transferring)</fullName>
    </alternativeName>
</protein>
<organism>
    <name type="scientific">Nitrobacter winogradskyi (strain ATCC 25391 / DSM 10237 / CIP 104748 / NCIMB 11846 / Nb-255)</name>
    <dbReference type="NCBI Taxonomy" id="323098"/>
    <lineage>
        <taxon>Bacteria</taxon>
        <taxon>Pseudomonadati</taxon>
        <taxon>Pseudomonadota</taxon>
        <taxon>Alphaproteobacteria</taxon>
        <taxon>Hyphomicrobiales</taxon>
        <taxon>Nitrobacteraceae</taxon>
        <taxon>Nitrobacter</taxon>
    </lineage>
</organism>
<sequence>MIAREEPATTFARRHIGPSSRDIAAMLETVGAKSLEALMNEALPPSIRQKTPLDLGEGFSETEVLTHMQALAAQNQPLTSLIGQGYSGTILPAVIQRNILENPAWYTAYTPYQPEISQGRLEALFNFQTMICDLTGLDVANASLLDEATAAAEAMALAERASSVKTKAFFVDHEVHPQTLAVLRTRAEPLGWTLVTGDPLHDLDKADVFGAVLQYPGTSGVVRDLRPAIAAIKAKGGLAVVAADLLALTLLTSPGVLGADIAIGSAQRFGVPMGYGGPHAAYMAVCNALKRLLPGRLVGLSVDSRGTPAYRLALQTREQHIRREKATSNICTAQVLLAVISSMYAVYHGPEGLAQIARTVHRHTATLAAGLTRLGFAPLNSTAFDTLTVNAGERQSEIVKRASSQGINLRINADGTLGIALDELTIEETVEALWRAFGATWSYADVEAHAPDLLPADLKRKTAYLTHPVFHEHRSETELLRYMRKLSDRDLALDRAMIPLGSCTMKLNATTEMIPLTWAAFANLHPFAPPEQAEGYFTLFENFEEWLLDITGYDAISLQPNSGAQGEYAGLLAIRGYHAARGESHRTVCLIPSSAHGTNPASANMAGMDVVVVACDARGDVDVDDLRTKSTQHADRLAAIMITYPSTHGVFEERIREICDIVHGHGGQVYLDGANMNAQVGLSRPGDYGADVSHLNLHKTFCIPHGGGGPGMGPIGVKAHLAPFLPGHPAIDDATPSAVGPVSAAPFGSASILTISYIYILMMGSEGLKRATEVAILNANYIAQRLDPHFPVLYRNVKGRVAHECIIDPRALKAKTGVTVDDIAKRLIDYGFHAPTMSFPVPGTLMIEPTESESKAELDRFCDAMIAIRQEIAEIEAGRWKVEASPLRHAPHTAHDIADDAWSRPYSRAQGCFPSGSSRSDKYWCPVGRVDNAYGDRNLVCSCPPVEDYAQAAE</sequence>
<feature type="chain" id="PRO_0000227109" description="Glycine dehydrogenase (decarboxylating)">
    <location>
        <begin position="1"/>
        <end position="954"/>
    </location>
</feature>
<feature type="modified residue" description="N6-(pyridoxal phosphate)lysine" evidence="1">
    <location>
        <position position="699"/>
    </location>
</feature>
<name>GCSP_NITWN</name>
<gene>
    <name evidence="1" type="primary">gcvP</name>
    <name type="ordered locus">Nwi_1284</name>
</gene>
<reference key="1">
    <citation type="journal article" date="2006" name="Appl. Environ. Microbiol.">
        <title>Genome sequence of the chemolithoautotrophic nitrite-oxidizing bacterium Nitrobacter winogradskyi Nb-255.</title>
        <authorList>
            <person name="Starkenburg S.R."/>
            <person name="Chain P.S.G."/>
            <person name="Sayavedra-Soto L.A."/>
            <person name="Hauser L."/>
            <person name="Land M.L."/>
            <person name="Larimer F.W."/>
            <person name="Malfatti S.A."/>
            <person name="Klotz M.G."/>
            <person name="Bottomley P.J."/>
            <person name="Arp D.J."/>
            <person name="Hickey W.J."/>
        </authorList>
    </citation>
    <scope>NUCLEOTIDE SEQUENCE [LARGE SCALE GENOMIC DNA]</scope>
    <source>
        <strain>ATCC 25391 / DSM 10237 / CIP 104748 / NCIMB 11846 / Nb-255</strain>
    </source>
</reference>
<keyword id="KW-0560">Oxidoreductase</keyword>
<keyword id="KW-0663">Pyridoxal phosphate</keyword>
<keyword id="KW-1185">Reference proteome</keyword>
<comment type="function">
    <text evidence="1">The glycine cleavage system catalyzes the degradation of glycine. The P protein binds the alpha-amino group of glycine through its pyridoxal phosphate cofactor; CO(2) is released and the remaining methylamine moiety is then transferred to the lipoamide cofactor of the H protein.</text>
</comment>
<comment type="catalytic activity">
    <reaction evidence="1">
        <text>N(6)-[(R)-lipoyl]-L-lysyl-[glycine-cleavage complex H protein] + glycine + H(+) = N(6)-[(R)-S(8)-aminomethyldihydrolipoyl]-L-lysyl-[glycine-cleavage complex H protein] + CO2</text>
        <dbReference type="Rhea" id="RHEA:24304"/>
        <dbReference type="Rhea" id="RHEA-COMP:10494"/>
        <dbReference type="Rhea" id="RHEA-COMP:10495"/>
        <dbReference type="ChEBI" id="CHEBI:15378"/>
        <dbReference type="ChEBI" id="CHEBI:16526"/>
        <dbReference type="ChEBI" id="CHEBI:57305"/>
        <dbReference type="ChEBI" id="CHEBI:83099"/>
        <dbReference type="ChEBI" id="CHEBI:83143"/>
        <dbReference type="EC" id="1.4.4.2"/>
    </reaction>
</comment>
<comment type="cofactor">
    <cofactor evidence="1">
        <name>pyridoxal 5'-phosphate</name>
        <dbReference type="ChEBI" id="CHEBI:597326"/>
    </cofactor>
</comment>
<comment type="subunit">
    <text evidence="1">The glycine cleavage system is composed of four proteins: P, T, L and H.</text>
</comment>
<comment type="similarity">
    <text evidence="1">Belongs to the GcvP family.</text>
</comment>
<dbReference type="EC" id="1.4.4.2" evidence="1"/>
<dbReference type="EMBL" id="CP000115">
    <property type="protein sequence ID" value="ABA04545.1"/>
    <property type="molecule type" value="Genomic_DNA"/>
</dbReference>
<dbReference type="RefSeq" id="WP_011314571.1">
    <property type="nucleotide sequence ID" value="NC_007406.1"/>
</dbReference>
<dbReference type="SMR" id="Q3ST46"/>
<dbReference type="STRING" id="323098.Nwi_1284"/>
<dbReference type="KEGG" id="nwi:Nwi_1284"/>
<dbReference type="eggNOG" id="COG0403">
    <property type="taxonomic scope" value="Bacteria"/>
</dbReference>
<dbReference type="eggNOG" id="COG1003">
    <property type="taxonomic scope" value="Bacteria"/>
</dbReference>
<dbReference type="HOGENOM" id="CLU_004620_3_2_5"/>
<dbReference type="OrthoDB" id="9801272at2"/>
<dbReference type="Proteomes" id="UP000002531">
    <property type="component" value="Chromosome"/>
</dbReference>
<dbReference type="GO" id="GO:0005829">
    <property type="term" value="C:cytosol"/>
    <property type="evidence" value="ECO:0007669"/>
    <property type="project" value="TreeGrafter"/>
</dbReference>
<dbReference type="GO" id="GO:0005960">
    <property type="term" value="C:glycine cleavage complex"/>
    <property type="evidence" value="ECO:0007669"/>
    <property type="project" value="TreeGrafter"/>
</dbReference>
<dbReference type="GO" id="GO:0016594">
    <property type="term" value="F:glycine binding"/>
    <property type="evidence" value="ECO:0007669"/>
    <property type="project" value="TreeGrafter"/>
</dbReference>
<dbReference type="GO" id="GO:0004375">
    <property type="term" value="F:glycine dehydrogenase (decarboxylating) activity"/>
    <property type="evidence" value="ECO:0007669"/>
    <property type="project" value="UniProtKB-EC"/>
</dbReference>
<dbReference type="GO" id="GO:0030170">
    <property type="term" value="F:pyridoxal phosphate binding"/>
    <property type="evidence" value="ECO:0007669"/>
    <property type="project" value="TreeGrafter"/>
</dbReference>
<dbReference type="GO" id="GO:0019464">
    <property type="term" value="P:glycine decarboxylation via glycine cleavage system"/>
    <property type="evidence" value="ECO:0007669"/>
    <property type="project" value="UniProtKB-UniRule"/>
</dbReference>
<dbReference type="CDD" id="cd00613">
    <property type="entry name" value="GDC-P"/>
    <property type="match status" value="2"/>
</dbReference>
<dbReference type="FunFam" id="3.40.640.10:FF:000005">
    <property type="entry name" value="Glycine dehydrogenase (decarboxylating), mitochondrial"/>
    <property type="match status" value="1"/>
</dbReference>
<dbReference type="FunFam" id="3.90.1150.10:FF:000007">
    <property type="entry name" value="Glycine dehydrogenase (decarboxylating), mitochondrial"/>
    <property type="match status" value="1"/>
</dbReference>
<dbReference type="FunFam" id="3.40.640.10:FF:000007">
    <property type="entry name" value="glycine dehydrogenase (Decarboxylating), mitochondrial"/>
    <property type="match status" value="1"/>
</dbReference>
<dbReference type="Gene3D" id="3.90.1150.10">
    <property type="entry name" value="Aspartate Aminotransferase, domain 1"/>
    <property type="match status" value="2"/>
</dbReference>
<dbReference type="Gene3D" id="3.40.640.10">
    <property type="entry name" value="Type I PLP-dependent aspartate aminotransferase-like (Major domain)"/>
    <property type="match status" value="2"/>
</dbReference>
<dbReference type="HAMAP" id="MF_00711">
    <property type="entry name" value="GcvP"/>
    <property type="match status" value="1"/>
</dbReference>
<dbReference type="InterPro" id="IPR003437">
    <property type="entry name" value="GcvP"/>
</dbReference>
<dbReference type="InterPro" id="IPR049316">
    <property type="entry name" value="GDC-P_C"/>
</dbReference>
<dbReference type="InterPro" id="IPR049315">
    <property type="entry name" value="GDC-P_N"/>
</dbReference>
<dbReference type="InterPro" id="IPR020581">
    <property type="entry name" value="GDC_P"/>
</dbReference>
<dbReference type="InterPro" id="IPR015424">
    <property type="entry name" value="PyrdxlP-dep_Trfase"/>
</dbReference>
<dbReference type="InterPro" id="IPR015421">
    <property type="entry name" value="PyrdxlP-dep_Trfase_major"/>
</dbReference>
<dbReference type="InterPro" id="IPR015422">
    <property type="entry name" value="PyrdxlP-dep_Trfase_small"/>
</dbReference>
<dbReference type="NCBIfam" id="TIGR00461">
    <property type="entry name" value="gcvP"/>
    <property type="match status" value="1"/>
</dbReference>
<dbReference type="NCBIfam" id="NF001696">
    <property type="entry name" value="PRK00451.1"/>
    <property type="match status" value="1"/>
</dbReference>
<dbReference type="NCBIfam" id="NF003346">
    <property type="entry name" value="PRK04366.1"/>
    <property type="match status" value="1"/>
</dbReference>
<dbReference type="PANTHER" id="PTHR11773:SF1">
    <property type="entry name" value="GLYCINE DEHYDROGENASE (DECARBOXYLATING), MITOCHONDRIAL"/>
    <property type="match status" value="1"/>
</dbReference>
<dbReference type="PANTHER" id="PTHR11773">
    <property type="entry name" value="GLYCINE DEHYDROGENASE, DECARBOXYLATING"/>
    <property type="match status" value="1"/>
</dbReference>
<dbReference type="Pfam" id="PF21478">
    <property type="entry name" value="GcvP2_C"/>
    <property type="match status" value="1"/>
</dbReference>
<dbReference type="Pfam" id="PF02347">
    <property type="entry name" value="GDC-P"/>
    <property type="match status" value="2"/>
</dbReference>
<dbReference type="SUPFAM" id="SSF53383">
    <property type="entry name" value="PLP-dependent transferases"/>
    <property type="match status" value="2"/>
</dbReference>
<evidence type="ECO:0000255" key="1">
    <source>
        <dbReference type="HAMAP-Rule" id="MF_00711"/>
    </source>
</evidence>